<comment type="function">
    <text evidence="1">Major role in the synthesis of nucleoside triphosphates other than ATP. The ATP gamma phosphate is transferred to the NDP beta phosphate via a ping-pong mechanism, using a phosphorylated active-site intermediate.</text>
</comment>
<comment type="catalytic activity">
    <reaction evidence="1">
        <text>a 2'-deoxyribonucleoside 5'-diphosphate + ATP = a 2'-deoxyribonucleoside 5'-triphosphate + ADP</text>
        <dbReference type="Rhea" id="RHEA:44640"/>
        <dbReference type="ChEBI" id="CHEBI:30616"/>
        <dbReference type="ChEBI" id="CHEBI:61560"/>
        <dbReference type="ChEBI" id="CHEBI:73316"/>
        <dbReference type="ChEBI" id="CHEBI:456216"/>
        <dbReference type="EC" id="2.7.4.6"/>
    </reaction>
</comment>
<comment type="catalytic activity">
    <reaction evidence="1">
        <text>a ribonucleoside 5'-diphosphate + ATP = a ribonucleoside 5'-triphosphate + ADP</text>
        <dbReference type="Rhea" id="RHEA:18113"/>
        <dbReference type="ChEBI" id="CHEBI:30616"/>
        <dbReference type="ChEBI" id="CHEBI:57930"/>
        <dbReference type="ChEBI" id="CHEBI:61557"/>
        <dbReference type="ChEBI" id="CHEBI:456216"/>
        <dbReference type="EC" id="2.7.4.6"/>
    </reaction>
</comment>
<comment type="cofactor">
    <cofactor evidence="1">
        <name>Mg(2+)</name>
        <dbReference type="ChEBI" id="CHEBI:18420"/>
    </cofactor>
</comment>
<comment type="subunit">
    <text evidence="1">Homotetramer.</text>
</comment>
<comment type="subcellular location">
    <subcellularLocation>
        <location evidence="1">Cytoplasm</location>
    </subcellularLocation>
</comment>
<comment type="similarity">
    <text evidence="1">Belongs to the NDK family.</text>
</comment>
<accession>Q5Z045</accession>
<proteinExistence type="inferred from homology"/>
<feature type="chain" id="PRO_0000137015" description="Nucleoside diphosphate kinase">
    <location>
        <begin position="1"/>
        <end position="139"/>
    </location>
</feature>
<feature type="active site" description="Pros-phosphohistidine intermediate" evidence="1">
    <location>
        <position position="117"/>
    </location>
</feature>
<feature type="binding site" evidence="1">
    <location>
        <position position="10"/>
    </location>
    <ligand>
        <name>ATP</name>
        <dbReference type="ChEBI" id="CHEBI:30616"/>
    </ligand>
</feature>
<feature type="binding site" evidence="1">
    <location>
        <position position="58"/>
    </location>
    <ligand>
        <name>ATP</name>
        <dbReference type="ChEBI" id="CHEBI:30616"/>
    </ligand>
</feature>
<feature type="binding site" evidence="1">
    <location>
        <position position="86"/>
    </location>
    <ligand>
        <name>ATP</name>
        <dbReference type="ChEBI" id="CHEBI:30616"/>
    </ligand>
</feature>
<feature type="binding site" evidence="1">
    <location>
        <position position="92"/>
    </location>
    <ligand>
        <name>ATP</name>
        <dbReference type="ChEBI" id="CHEBI:30616"/>
    </ligand>
</feature>
<feature type="binding site" evidence="1">
    <location>
        <position position="104"/>
    </location>
    <ligand>
        <name>ATP</name>
        <dbReference type="ChEBI" id="CHEBI:30616"/>
    </ligand>
</feature>
<feature type="binding site" evidence="1">
    <location>
        <position position="114"/>
    </location>
    <ligand>
        <name>ATP</name>
        <dbReference type="ChEBI" id="CHEBI:30616"/>
    </ligand>
</feature>
<gene>
    <name evidence="1" type="primary">ndk</name>
    <name type="ordered locus">NFA_13510</name>
</gene>
<sequence>MTEQTLVLIKPDGVSRGLVGEVLARIERKGLKIAALELKQVSDELAREHYAEHADKPFFGSLIEFITSGPVVAAVLEGPRAIAAFRQLAGGTDPVEKAAPGSIRGDFGLETQYNLVHGSDSPESAKREIGLWFPEFPVA</sequence>
<reference key="1">
    <citation type="journal article" date="2004" name="Proc. Natl. Acad. Sci. U.S.A.">
        <title>The complete genomic sequence of Nocardia farcinica IFM 10152.</title>
        <authorList>
            <person name="Ishikawa J."/>
            <person name="Yamashita A."/>
            <person name="Mikami Y."/>
            <person name="Hoshino Y."/>
            <person name="Kurita H."/>
            <person name="Hotta K."/>
            <person name="Shiba T."/>
            <person name="Hattori M."/>
        </authorList>
    </citation>
    <scope>NUCLEOTIDE SEQUENCE [LARGE SCALE GENOMIC DNA]</scope>
    <source>
        <strain>IFM 10152</strain>
    </source>
</reference>
<dbReference type="EC" id="2.7.4.6" evidence="1"/>
<dbReference type="EMBL" id="AP006618">
    <property type="protein sequence ID" value="BAD56196.1"/>
    <property type="molecule type" value="Genomic_DNA"/>
</dbReference>
<dbReference type="RefSeq" id="WP_011207881.1">
    <property type="nucleotide sequence ID" value="NC_006361.1"/>
</dbReference>
<dbReference type="SMR" id="Q5Z045"/>
<dbReference type="STRING" id="247156.NFA_13510"/>
<dbReference type="GeneID" id="61132173"/>
<dbReference type="KEGG" id="nfa:NFA_13510"/>
<dbReference type="eggNOG" id="COG0105">
    <property type="taxonomic scope" value="Bacteria"/>
</dbReference>
<dbReference type="HOGENOM" id="CLU_060216_6_3_11"/>
<dbReference type="OrthoDB" id="9801161at2"/>
<dbReference type="Proteomes" id="UP000006820">
    <property type="component" value="Chromosome"/>
</dbReference>
<dbReference type="GO" id="GO:0005737">
    <property type="term" value="C:cytoplasm"/>
    <property type="evidence" value="ECO:0007669"/>
    <property type="project" value="UniProtKB-SubCell"/>
</dbReference>
<dbReference type="GO" id="GO:0005524">
    <property type="term" value="F:ATP binding"/>
    <property type="evidence" value="ECO:0007669"/>
    <property type="project" value="UniProtKB-UniRule"/>
</dbReference>
<dbReference type="GO" id="GO:0046872">
    <property type="term" value="F:metal ion binding"/>
    <property type="evidence" value="ECO:0007669"/>
    <property type="project" value="UniProtKB-KW"/>
</dbReference>
<dbReference type="GO" id="GO:0004550">
    <property type="term" value="F:nucleoside diphosphate kinase activity"/>
    <property type="evidence" value="ECO:0007669"/>
    <property type="project" value="UniProtKB-UniRule"/>
</dbReference>
<dbReference type="GO" id="GO:0006241">
    <property type="term" value="P:CTP biosynthetic process"/>
    <property type="evidence" value="ECO:0007669"/>
    <property type="project" value="UniProtKB-UniRule"/>
</dbReference>
<dbReference type="GO" id="GO:0006183">
    <property type="term" value="P:GTP biosynthetic process"/>
    <property type="evidence" value="ECO:0007669"/>
    <property type="project" value="UniProtKB-UniRule"/>
</dbReference>
<dbReference type="GO" id="GO:0006228">
    <property type="term" value="P:UTP biosynthetic process"/>
    <property type="evidence" value="ECO:0007669"/>
    <property type="project" value="UniProtKB-UniRule"/>
</dbReference>
<dbReference type="CDD" id="cd04413">
    <property type="entry name" value="NDPk_I"/>
    <property type="match status" value="1"/>
</dbReference>
<dbReference type="FunFam" id="3.30.70.141:FF:000003">
    <property type="entry name" value="Nucleoside diphosphate kinase"/>
    <property type="match status" value="1"/>
</dbReference>
<dbReference type="Gene3D" id="3.30.70.141">
    <property type="entry name" value="Nucleoside diphosphate kinase-like domain"/>
    <property type="match status" value="1"/>
</dbReference>
<dbReference type="HAMAP" id="MF_00451">
    <property type="entry name" value="NDP_kinase"/>
    <property type="match status" value="1"/>
</dbReference>
<dbReference type="InterPro" id="IPR034907">
    <property type="entry name" value="NDK-like_dom"/>
</dbReference>
<dbReference type="InterPro" id="IPR036850">
    <property type="entry name" value="NDK-like_dom_sf"/>
</dbReference>
<dbReference type="InterPro" id="IPR001564">
    <property type="entry name" value="Nucleoside_diP_kinase"/>
</dbReference>
<dbReference type="InterPro" id="IPR023005">
    <property type="entry name" value="Nucleoside_diP_kinase_AS"/>
</dbReference>
<dbReference type="NCBIfam" id="NF001908">
    <property type="entry name" value="PRK00668.1"/>
    <property type="match status" value="1"/>
</dbReference>
<dbReference type="PANTHER" id="PTHR11349">
    <property type="entry name" value="NUCLEOSIDE DIPHOSPHATE KINASE"/>
    <property type="match status" value="1"/>
</dbReference>
<dbReference type="Pfam" id="PF00334">
    <property type="entry name" value="NDK"/>
    <property type="match status" value="1"/>
</dbReference>
<dbReference type="PRINTS" id="PR01243">
    <property type="entry name" value="NUCDPKINASE"/>
</dbReference>
<dbReference type="SMART" id="SM00562">
    <property type="entry name" value="NDK"/>
    <property type="match status" value="1"/>
</dbReference>
<dbReference type="SUPFAM" id="SSF54919">
    <property type="entry name" value="Nucleoside diphosphate kinase, NDK"/>
    <property type="match status" value="1"/>
</dbReference>
<dbReference type="PROSITE" id="PS00469">
    <property type="entry name" value="NDPK"/>
    <property type="match status" value="1"/>
</dbReference>
<dbReference type="PROSITE" id="PS51374">
    <property type="entry name" value="NDPK_LIKE"/>
    <property type="match status" value="1"/>
</dbReference>
<evidence type="ECO:0000255" key="1">
    <source>
        <dbReference type="HAMAP-Rule" id="MF_00451"/>
    </source>
</evidence>
<protein>
    <recommendedName>
        <fullName evidence="1">Nucleoside diphosphate kinase</fullName>
        <shortName evidence="1">NDK</shortName>
        <shortName evidence="1">NDP kinase</shortName>
        <ecNumber evidence="1">2.7.4.6</ecNumber>
    </recommendedName>
    <alternativeName>
        <fullName evidence="1">Nucleoside-2-P kinase</fullName>
    </alternativeName>
</protein>
<keyword id="KW-0067">ATP-binding</keyword>
<keyword id="KW-0963">Cytoplasm</keyword>
<keyword id="KW-0418">Kinase</keyword>
<keyword id="KW-0460">Magnesium</keyword>
<keyword id="KW-0479">Metal-binding</keyword>
<keyword id="KW-0546">Nucleotide metabolism</keyword>
<keyword id="KW-0547">Nucleotide-binding</keyword>
<keyword id="KW-0597">Phosphoprotein</keyword>
<keyword id="KW-1185">Reference proteome</keyword>
<keyword id="KW-0808">Transferase</keyword>
<organism>
    <name type="scientific">Nocardia farcinica (strain IFM 10152)</name>
    <dbReference type="NCBI Taxonomy" id="247156"/>
    <lineage>
        <taxon>Bacteria</taxon>
        <taxon>Bacillati</taxon>
        <taxon>Actinomycetota</taxon>
        <taxon>Actinomycetes</taxon>
        <taxon>Mycobacteriales</taxon>
        <taxon>Nocardiaceae</taxon>
        <taxon>Nocardia</taxon>
    </lineage>
</organism>
<name>NDK_NOCFA</name>